<feature type="chain" id="PRO_0000106000" description="Nucleoprotein">
    <location>
        <begin position="1"/>
        <end position="389"/>
    </location>
</feature>
<feature type="domain" description="CoV N NTD" evidence="2">
    <location>
        <begin position="20"/>
        <end position="141"/>
    </location>
</feature>
<feature type="domain" description="CoV N CTD" evidence="3">
    <location>
        <begin position="236"/>
        <end position="352"/>
    </location>
</feature>
<feature type="region of interest" description="RNA-binding" evidence="1">
    <location>
        <begin position="22"/>
        <end position="148"/>
    </location>
</feature>
<feature type="region of interest" description="Disordered" evidence="4">
    <location>
        <begin position="111"/>
        <end position="178"/>
    </location>
</feature>
<feature type="region of interest" description="Disordered" evidence="4">
    <location>
        <begin position="194"/>
        <end position="264"/>
    </location>
</feature>
<feature type="region of interest" description="Dimerization" evidence="1">
    <location>
        <begin position="243"/>
        <end position="347"/>
    </location>
</feature>
<feature type="region of interest" description="Disordered" evidence="4">
    <location>
        <begin position="363"/>
        <end position="389"/>
    </location>
</feature>
<feature type="compositionally biased region" description="Low complexity" evidence="4">
    <location>
        <begin position="146"/>
        <end position="158"/>
    </location>
</feature>
<feature type="compositionally biased region" description="Basic and acidic residues" evidence="4">
    <location>
        <begin position="159"/>
        <end position="178"/>
    </location>
</feature>
<feature type="compositionally biased region" description="Polar residues" evidence="4">
    <location>
        <begin position="207"/>
        <end position="235"/>
    </location>
</feature>
<feature type="compositionally biased region" description="Basic and acidic residues" evidence="4">
    <location>
        <begin position="236"/>
        <end position="246"/>
    </location>
</feature>
<feature type="compositionally biased region" description="Acidic residues" evidence="4">
    <location>
        <begin position="379"/>
        <end position="389"/>
    </location>
</feature>
<feature type="modified residue" description="Phosphoserine; by host" evidence="1">
    <location>
        <position position="145"/>
    </location>
</feature>
<feature type="sequence conflict" description="In Ref. 1; AAA45463." ref="1">
    <original>P</original>
    <variation>S</variation>
    <location>
        <position position="35"/>
    </location>
</feature>
<feature type="sequence conflict" description="In Ref. 1." ref="1">
    <original>Y</original>
    <variation>H</variation>
    <location>
        <position position="115"/>
    </location>
</feature>
<feature type="sequence conflict" description="In Ref. 1." ref="1">
    <original>V</original>
    <variation>A</variation>
    <location>
        <position position="117"/>
    </location>
</feature>
<feature type="sequence conflict" description="In Ref. 1; AAA45463." ref="1">
    <original>R</original>
    <variation>P</variation>
    <location>
        <position position="160"/>
    </location>
</feature>
<feature type="sequence conflict" description="In Ref. 1; AAA45463." ref="1">
    <original>N</original>
    <variation>Y</variation>
    <location>
        <position position="175"/>
    </location>
</feature>
<feature type="sequence conflict" description="In Ref. 1; AAA45463." ref="1">
    <original>MQ</original>
    <variation>IE</variation>
    <location>
        <begin position="244"/>
        <end position="245"/>
    </location>
</feature>
<feature type="sequence conflict" description="In Ref. 1; AAA45463." ref="1">
    <original>H</original>
    <variation>Q</variation>
    <location>
        <position position="351"/>
    </location>
</feature>
<feature type="sequence conflict" description="In Ref. 1; AAA45463." ref="1">
    <original>V</original>
    <variation>F</variation>
    <location>
        <position position="378"/>
    </location>
</feature>
<organismHost>
    <name type="scientific">Homo sapiens</name>
    <name type="common">Human</name>
    <dbReference type="NCBI Taxonomy" id="9606"/>
</organismHost>
<evidence type="ECO:0000255" key="1">
    <source>
        <dbReference type="HAMAP-Rule" id="MF_04095"/>
    </source>
</evidence>
<evidence type="ECO:0000255" key="2">
    <source>
        <dbReference type="PROSITE-ProRule" id="PRU01276"/>
    </source>
</evidence>
<evidence type="ECO:0000255" key="3">
    <source>
        <dbReference type="PROSITE-ProRule" id="PRU01277"/>
    </source>
</evidence>
<evidence type="ECO:0000256" key="4">
    <source>
        <dbReference type="SAM" id="MobiDB-lite"/>
    </source>
</evidence>
<evidence type="ECO:0000269" key="5">
    <source>
    </source>
</evidence>
<reference key="1">
    <citation type="journal article" date="1989" name="Virology">
        <title>Sequence analysis of the nucleocapsid protein gene of human coronavirus 229E.</title>
        <authorList>
            <person name="Schreiber S.S."/>
            <person name="Kamahora T."/>
            <person name="Lai M.M.C."/>
        </authorList>
    </citation>
    <scope>NUCLEOTIDE SEQUENCE [GENOMIC RNA]</scope>
</reference>
<reference key="2">
    <citation type="journal article" date="1990" name="J. Med. Virol.">
        <title>Characterization of a nucleic acid probe for the diagnosis of human coronavirus 229E infections.</title>
        <authorList>
            <person name="Myints S."/>
            <person name="Harmsen D."/>
            <person name="Raabe T."/>
            <person name="Siddell S.G."/>
        </authorList>
    </citation>
    <scope>NUCLEOTIDE SEQUENCE [MRNA]</scope>
</reference>
<reference key="3">
    <citation type="journal article" date="2001" name="J. Gen. Virol.">
        <title>Infectious RNA transcribed in vitro from a cDNA copy of the human coronavirus genome cloned in vaccinia virus.</title>
        <authorList>
            <person name="Thiel V."/>
            <person name="Herold J."/>
            <person name="Schelle B."/>
            <person name="Siddell S.G."/>
        </authorList>
    </citation>
    <scope>NUCLEOTIDE SEQUENCE [GENOMIC RNA]</scope>
</reference>
<reference key="4">
    <citation type="journal article" date="2005" name="J. Virol.">
        <title>Selective replication of coronavirus genomes that express nucleocapsid protein.</title>
        <authorList>
            <person name="Schelle B."/>
            <person name="Karl N."/>
            <person name="Ludewig B."/>
            <person name="Siddell S.G."/>
            <person name="Thiel V."/>
        </authorList>
    </citation>
    <scope>FUNCTION</scope>
</reference>
<organism>
    <name type="scientific">Human coronavirus 229E</name>
    <name type="common">HCoV-229E</name>
    <dbReference type="NCBI Taxonomy" id="11137"/>
    <lineage>
        <taxon>Viruses</taxon>
        <taxon>Riboviria</taxon>
        <taxon>Orthornavirae</taxon>
        <taxon>Pisuviricota</taxon>
        <taxon>Pisoniviricetes</taxon>
        <taxon>Nidovirales</taxon>
        <taxon>Cornidovirineae</taxon>
        <taxon>Coronaviridae</taxon>
        <taxon>Orthocoronavirinae</taxon>
        <taxon>Alphacoronavirus</taxon>
        <taxon>Duvinacovirus</taxon>
    </lineage>
</organism>
<comment type="function">
    <text evidence="1 5">Packages the positive strand viral genome RNA into a helical ribonucleocapsid (RNP) and plays a fundamental role during virion assembly through its interactions with the viral genome and membrane protein M. Plays an important role in enhancing the efficiency of subgenomic viral RNA transcription as well as viral replication.</text>
</comment>
<comment type="subunit">
    <text evidence="1">Homooligomer. Both monomeric and oligomeric forms interact with RNA. Interacts with protein M. Interacts with NSP3; this interaction serves to tether the genome to the newly translated replicase-transcriptase complex at a very early stage of infection.</text>
</comment>
<comment type="interaction">
    <interactant intactId="EBI-8172439">
        <id>P15130</id>
    </interactant>
    <interactant intactId="EBI-8172439">
        <id>P15130</id>
        <label>N</label>
    </interactant>
    <organismsDiffer>false</organismsDiffer>
    <experiments>19</experiments>
</comment>
<comment type="interaction">
    <interactant intactId="EBI-8172439">
        <id>P15130</id>
    </interactant>
    <interactant intactId="EBI-81531">
        <id>P11940</id>
        <label>PABPC1</label>
    </interactant>
    <organismsDiffer>true</organismsDiffer>
    <experiments>4</experiments>
</comment>
<comment type="subcellular location">
    <subcellularLocation>
        <location evidence="1">Virion</location>
    </subcellularLocation>
    <subcellularLocation>
        <location evidence="1">Host endoplasmic reticulum-Golgi intermediate compartment</location>
    </subcellularLocation>
    <subcellularLocation>
        <location evidence="1">Host Golgi apparatus</location>
    </subcellularLocation>
    <text evidence="1">Located inside the virion, complexed with the viral RNA. Probably associates with ER-derived membranes where it participates in viral RNA synthesis and virus budding.</text>
</comment>
<comment type="PTM">
    <text evidence="1">ADP-ribosylated. The ADP-ribosylation is retained in the virion during infection.</text>
</comment>
<comment type="PTM">
    <text evidence="1">Phosphorylated on serine and threonine residues.</text>
</comment>
<comment type="similarity">
    <text evidence="1">Belongs to the alphacoronavirus nucleocapsid protein family.</text>
</comment>
<protein>
    <recommendedName>
        <fullName evidence="1">Nucleoprotein</fullName>
    </recommendedName>
    <alternativeName>
        <fullName evidence="1">Nucleocapsid protein</fullName>
        <shortName evidence="1">NC</shortName>
        <shortName evidence="1">Protein N</shortName>
    </alternativeName>
</protein>
<proteinExistence type="evidence at protein level"/>
<accession>P15130</accession>
<accession>Q66175</accession>
<keyword id="KW-0002">3D-structure</keyword>
<keyword id="KW-0013">ADP-ribosylation</keyword>
<keyword id="KW-1040">Host Golgi apparatus</keyword>
<keyword id="KW-0597">Phosphoprotein</keyword>
<keyword id="KW-1185">Reference proteome</keyword>
<keyword id="KW-0687">Ribonucleoprotein</keyword>
<keyword id="KW-0694">RNA-binding</keyword>
<keyword id="KW-0804">Transcription</keyword>
<keyword id="KW-0805">Transcription regulation</keyword>
<keyword id="KW-0543">Viral nucleoprotein</keyword>
<keyword id="KW-0946">Virion</keyword>
<gene>
    <name evidence="1" type="primary">N</name>
    <name type="ORF">7</name>
</gene>
<name>NCAP_CVH22</name>
<dbReference type="EMBL" id="J04419">
    <property type="protein sequence ID" value="AAA45463.1"/>
    <property type="molecule type" value="Genomic_RNA"/>
</dbReference>
<dbReference type="EMBL" id="X51325">
    <property type="protein sequence ID" value="CAA35708.1"/>
    <property type="molecule type" value="mRNA"/>
</dbReference>
<dbReference type="EMBL" id="AF304460">
    <property type="protein sequence ID" value="AAG48597.1"/>
    <property type="molecule type" value="Genomic_RNA"/>
</dbReference>
<dbReference type="PIR" id="A30119">
    <property type="entry name" value="VHIH2E"/>
</dbReference>
<dbReference type="PIR" id="S08031">
    <property type="entry name" value="S08031"/>
</dbReference>
<dbReference type="RefSeq" id="NP_073556.1">
    <property type="nucleotide sequence ID" value="NC_002645.1"/>
</dbReference>
<dbReference type="PDB" id="7BN3">
    <property type="method" value="X-ray"/>
    <property type="resolution" value="1.93 A"/>
    <property type="chains" value="D/E/F=351-366"/>
</dbReference>
<dbReference type="PDB" id="7LGT">
    <property type="method" value="X-ray"/>
    <property type="resolution" value="1.97 A"/>
    <property type="chains" value="E/F=75-83"/>
</dbReference>
<dbReference type="PDBsum" id="7BN3"/>
<dbReference type="PDBsum" id="7LGT"/>
<dbReference type="SMR" id="P15130"/>
<dbReference type="IntAct" id="P15130">
    <property type="interactions" value="229"/>
</dbReference>
<dbReference type="MINT" id="P15130"/>
<dbReference type="DNASU" id="918763"/>
<dbReference type="GeneID" id="918763"/>
<dbReference type="KEGG" id="vg:918763"/>
<dbReference type="OrthoDB" id="3036at10239"/>
<dbReference type="Proteomes" id="UP000006716">
    <property type="component" value="Genome"/>
</dbReference>
<dbReference type="GO" id="GO:0044172">
    <property type="term" value="C:host cell endoplasmic reticulum-Golgi intermediate compartment"/>
    <property type="evidence" value="ECO:0007669"/>
    <property type="project" value="UniProtKB-SubCell"/>
</dbReference>
<dbReference type="GO" id="GO:0044177">
    <property type="term" value="C:host cell Golgi apparatus"/>
    <property type="evidence" value="ECO:0007669"/>
    <property type="project" value="UniProtKB-SubCell"/>
</dbReference>
<dbReference type="GO" id="GO:1990904">
    <property type="term" value="C:ribonucleoprotein complex"/>
    <property type="evidence" value="ECO:0007669"/>
    <property type="project" value="UniProtKB-KW"/>
</dbReference>
<dbReference type="GO" id="GO:0019013">
    <property type="term" value="C:viral nucleocapsid"/>
    <property type="evidence" value="ECO:0007669"/>
    <property type="project" value="UniProtKB-KW"/>
</dbReference>
<dbReference type="GO" id="GO:0042802">
    <property type="term" value="F:identical protein binding"/>
    <property type="evidence" value="ECO:0000353"/>
    <property type="project" value="IntAct"/>
</dbReference>
<dbReference type="GO" id="GO:0003723">
    <property type="term" value="F:RNA binding"/>
    <property type="evidence" value="ECO:0007669"/>
    <property type="project" value="UniProtKB-KW"/>
</dbReference>
<dbReference type="CDD" id="cd21595">
    <property type="entry name" value="CoV_N-CTD"/>
    <property type="match status" value="1"/>
</dbReference>
<dbReference type="CDD" id="cd21554">
    <property type="entry name" value="CoV_N-NTD"/>
    <property type="match status" value="1"/>
</dbReference>
<dbReference type="HAMAP" id="MF_04095">
    <property type="entry name" value="ALPHA_CORONA_NCAP"/>
    <property type="match status" value="1"/>
</dbReference>
<dbReference type="InterPro" id="IPR044344">
    <property type="entry name" value="N_prot_C_CoV"/>
</dbReference>
<dbReference type="InterPro" id="IPR044345">
    <property type="entry name" value="N_prot_N_CoV"/>
</dbReference>
<dbReference type="InterPro" id="IPR042548">
    <property type="entry name" value="NCAP_aCoV"/>
</dbReference>
<dbReference type="InterPro" id="IPR001218">
    <property type="entry name" value="Nucleocap_CoV"/>
</dbReference>
<dbReference type="InterPro" id="IPR037179">
    <property type="entry name" value="Nucleocapsid_C"/>
</dbReference>
<dbReference type="InterPro" id="IPR037195">
    <property type="entry name" value="Nucleocapsid_N"/>
</dbReference>
<dbReference type="Pfam" id="PF00937">
    <property type="entry name" value="CoV_nucleocap"/>
    <property type="match status" value="1"/>
</dbReference>
<dbReference type="PIRSF" id="PIRSF003888">
    <property type="entry name" value="Corona_nucleocap"/>
    <property type="match status" value="1"/>
</dbReference>
<dbReference type="SUPFAM" id="SSF110304">
    <property type="entry name" value="Coronavirus RNA-binding domain"/>
    <property type="match status" value="1"/>
</dbReference>
<dbReference type="SUPFAM" id="SSF103068">
    <property type="entry name" value="Nucleocapsid protein dimerization domain"/>
    <property type="match status" value="1"/>
</dbReference>
<dbReference type="PROSITE" id="PS51929">
    <property type="entry name" value="COV_N_CTD"/>
    <property type="match status" value="1"/>
</dbReference>
<dbReference type="PROSITE" id="PS51928">
    <property type="entry name" value="COV_N_NTD"/>
    <property type="match status" value="1"/>
</dbReference>
<sequence>MATVKWADASEPQRGRQGRIPYSLYSPLLVDSEQPWKVIPRNLVPINKKDKNKLIGYWNVQKRFRTRKGKRVDLSPKLHFYYLGTGPHKDAKFRERVEGVVWVAVDGAKTEPTGYGVRRKNSEPEIPHFNQKLPNGVTVVEEPDSRAPSRSQSRSQSRGRGESKPQSRNPSSDRNHNSQDDIMKAVAAALKSLGFDKPQEKDKKSAKTGTPKPSRNQSPASSQTSAKSLARSQSSETKEQKHEMQKPRWKRQPNDDVTSNVTQCFGPRDLDHNFGSAGVVANGVKAKGYPQFAELVPSTAAMLFDSHIVSKESGNTVVLTFTTRVTVPKDHPHLGKFLEELNAFTREMQQHPLLNPSALEFNPSQTSPATAEPVRDEVSIETDIIDEVN</sequence>